<gene>
    <name evidence="1" type="primary">dapE</name>
    <name type="ordered locus">Sputw3181_1888</name>
</gene>
<proteinExistence type="inferred from homology"/>
<organism>
    <name type="scientific">Shewanella sp. (strain W3-18-1)</name>
    <dbReference type="NCBI Taxonomy" id="351745"/>
    <lineage>
        <taxon>Bacteria</taxon>
        <taxon>Pseudomonadati</taxon>
        <taxon>Pseudomonadota</taxon>
        <taxon>Gammaproteobacteria</taxon>
        <taxon>Alteromonadales</taxon>
        <taxon>Shewanellaceae</taxon>
        <taxon>Shewanella</taxon>
    </lineage>
</organism>
<feature type="chain" id="PRO_0000375743" description="Succinyl-diaminopimelate desuccinylase">
    <location>
        <begin position="1"/>
        <end position="379"/>
    </location>
</feature>
<feature type="active site" evidence="1">
    <location>
        <position position="72"/>
    </location>
</feature>
<feature type="active site" description="Proton acceptor" evidence="1">
    <location>
        <position position="137"/>
    </location>
</feature>
<feature type="binding site" evidence="1">
    <location>
        <position position="70"/>
    </location>
    <ligand>
        <name>Zn(2+)</name>
        <dbReference type="ChEBI" id="CHEBI:29105"/>
        <label>1</label>
    </ligand>
</feature>
<feature type="binding site" evidence="1">
    <location>
        <position position="103"/>
    </location>
    <ligand>
        <name>Zn(2+)</name>
        <dbReference type="ChEBI" id="CHEBI:29105"/>
        <label>1</label>
    </ligand>
</feature>
<feature type="binding site" evidence="1">
    <location>
        <position position="103"/>
    </location>
    <ligand>
        <name>Zn(2+)</name>
        <dbReference type="ChEBI" id="CHEBI:29105"/>
        <label>2</label>
    </ligand>
</feature>
<feature type="binding site" evidence="1">
    <location>
        <position position="138"/>
    </location>
    <ligand>
        <name>Zn(2+)</name>
        <dbReference type="ChEBI" id="CHEBI:29105"/>
        <label>2</label>
    </ligand>
</feature>
<feature type="binding site" evidence="1">
    <location>
        <position position="166"/>
    </location>
    <ligand>
        <name>Zn(2+)</name>
        <dbReference type="ChEBI" id="CHEBI:29105"/>
        <label>1</label>
    </ligand>
</feature>
<feature type="binding site" evidence="1">
    <location>
        <position position="352"/>
    </location>
    <ligand>
        <name>Zn(2+)</name>
        <dbReference type="ChEBI" id="CHEBI:29105"/>
        <label>2</label>
    </ligand>
</feature>
<reference key="1">
    <citation type="submission" date="2006-12" db="EMBL/GenBank/DDBJ databases">
        <title>Complete sequence of Shewanella sp. W3-18-1.</title>
        <authorList>
            <consortium name="US DOE Joint Genome Institute"/>
            <person name="Copeland A."/>
            <person name="Lucas S."/>
            <person name="Lapidus A."/>
            <person name="Barry K."/>
            <person name="Detter J.C."/>
            <person name="Glavina del Rio T."/>
            <person name="Hammon N."/>
            <person name="Israni S."/>
            <person name="Dalin E."/>
            <person name="Tice H."/>
            <person name="Pitluck S."/>
            <person name="Chain P."/>
            <person name="Malfatti S."/>
            <person name="Shin M."/>
            <person name="Vergez L."/>
            <person name="Schmutz J."/>
            <person name="Larimer F."/>
            <person name="Land M."/>
            <person name="Hauser L."/>
            <person name="Kyrpides N."/>
            <person name="Lykidis A."/>
            <person name="Tiedje J."/>
            <person name="Richardson P."/>
        </authorList>
    </citation>
    <scope>NUCLEOTIDE SEQUENCE [LARGE SCALE GENOMIC DNA]</scope>
    <source>
        <strain>W3-18-1</strain>
    </source>
</reference>
<comment type="function">
    <text evidence="1">Catalyzes the hydrolysis of N-succinyl-L,L-diaminopimelic acid (SDAP), forming succinate and LL-2,6-diaminopimelate (DAP), an intermediate involved in the bacterial biosynthesis of lysine and meso-diaminopimelic acid, an essential component of bacterial cell walls.</text>
</comment>
<comment type="catalytic activity">
    <reaction evidence="1">
        <text>N-succinyl-(2S,6S)-2,6-diaminopimelate + H2O = (2S,6S)-2,6-diaminopimelate + succinate</text>
        <dbReference type="Rhea" id="RHEA:22608"/>
        <dbReference type="ChEBI" id="CHEBI:15377"/>
        <dbReference type="ChEBI" id="CHEBI:30031"/>
        <dbReference type="ChEBI" id="CHEBI:57609"/>
        <dbReference type="ChEBI" id="CHEBI:58087"/>
        <dbReference type="EC" id="3.5.1.18"/>
    </reaction>
</comment>
<comment type="cofactor">
    <cofactor evidence="1">
        <name>Zn(2+)</name>
        <dbReference type="ChEBI" id="CHEBI:29105"/>
    </cofactor>
    <cofactor evidence="1">
        <name>Co(2+)</name>
        <dbReference type="ChEBI" id="CHEBI:48828"/>
    </cofactor>
    <text evidence="1">Binds 2 Zn(2+) or Co(2+) ions per subunit.</text>
</comment>
<comment type="pathway">
    <text evidence="1">Amino-acid biosynthesis; L-lysine biosynthesis via DAP pathway; LL-2,6-diaminopimelate from (S)-tetrahydrodipicolinate (succinylase route): step 3/3.</text>
</comment>
<comment type="subunit">
    <text evidence="1">Homodimer.</text>
</comment>
<comment type="similarity">
    <text evidence="1">Belongs to the peptidase M20A family. DapE subfamily.</text>
</comment>
<accession>A1RJ78</accession>
<name>DAPE_SHESW</name>
<dbReference type="EC" id="3.5.1.18" evidence="1"/>
<dbReference type="EMBL" id="CP000503">
    <property type="protein sequence ID" value="ABM24723.1"/>
    <property type="molecule type" value="Genomic_DNA"/>
</dbReference>
<dbReference type="RefSeq" id="WP_011789215.1">
    <property type="nucleotide sequence ID" value="NC_008750.1"/>
</dbReference>
<dbReference type="SMR" id="A1RJ78"/>
<dbReference type="KEGG" id="shw:Sputw3181_1888"/>
<dbReference type="HOGENOM" id="CLU_021802_4_0_6"/>
<dbReference type="UniPathway" id="UPA00034">
    <property type="reaction ID" value="UER00021"/>
</dbReference>
<dbReference type="Proteomes" id="UP000002597">
    <property type="component" value="Chromosome"/>
</dbReference>
<dbReference type="GO" id="GO:0008777">
    <property type="term" value="F:acetylornithine deacetylase activity"/>
    <property type="evidence" value="ECO:0007669"/>
    <property type="project" value="TreeGrafter"/>
</dbReference>
<dbReference type="GO" id="GO:0050897">
    <property type="term" value="F:cobalt ion binding"/>
    <property type="evidence" value="ECO:0007669"/>
    <property type="project" value="UniProtKB-UniRule"/>
</dbReference>
<dbReference type="GO" id="GO:0009014">
    <property type="term" value="F:succinyl-diaminopimelate desuccinylase activity"/>
    <property type="evidence" value="ECO:0007669"/>
    <property type="project" value="UniProtKB-UniRule"/>
</dbReference>
<dbReference type="GO" id="GO:0008270">
    <property type="term" value="F:zinc ion binding"/>
    <property type="evidence" value="ECO:0007669"/>
    <property type="project" value="UniProtKB-UniRule"/>
</dbReference>
<dbReference type="GO" id="GO:0019877">
    <property type="term" value="P:diaminopimelate biosynthetic process"/>
    <property type="evidence" value="ECO:0007669"/>
    <property type="project" value="UniProtKB-UniRule"/>
</dbReference>
<dbReference type="GO" id="GO:0006526">
    <property type="term" value="P:L-arginine biosynthetic process"/>
    <property type="evidence" value="ECO:0007669"/>
    <property type="project" value="TreeGrafter"/>
</dbReference>
<dbReference type="GO" id="GO:0009089">
    <property type="term" value="P:lysine biosynthetic process via diaminopimelate"/>
    <property type="evidence" value="ECO:0007669"/>
    <property type="project" value="UniProtKB-UniRule"/>
</dbReference>
<dbReference type="CDD" id="cd03891">
    <property type="entry name" value="M20_DapE_proteobac"/>
    <property type="match status" value="1"/>
</dbReference>
<dbReference type="FunFam" id="3.30.70.360:FF:000011">
    <property type="entry name" value="Succinyl-diaminopimelate desuccinylase"/>
    <property type="match status" value="1"/>
</dbReference>
<dbReference type="FunFam" id="3.40.630.10:FF:000005">
    <property type="entry name" value="Succinyl-diaminopimelate desuccinylase"/>
    <property type="match status" value="1"/>
</dbReference>
<dbReference type="Gene3D" id="3.40.630.10">
    <property type="entry name" value="Zn peptidases"/>
    <property type="match status" value="2"/>
</dbReference>
<dbReference type="HAMAP" id="MF_01690">
    <property type="entry name" value="DapE"/>
    <property type="match status" value="1"/>
</dbReference>
<dbReference type="InterPro" id="IPR001261">
    <property type="entry name" value="ArgE/DapE_CS"/>
</dbReference>
<dbReference type="InterPro" id="IPR036264">
    <property type="entry name" value="Bact_exopeptidase_dim_dom"/>
</dbReference>
<dbReference type="InterPro" id="IPR005941">
    <property type="entry name" value="DapE_proteobac"/>
</dbReference>
<dbReference type="InterPro" id="IPR002933">
    <property type="entry name" value="Peptidase_M20"/>
</dbReference>
<dbReference type="InterPro" id="IPR011650">
    <property type="entry name" value="Peptidase_M20_dimer"/>
</dbReference>
<dbReference type="InterPro" id="IPR050072">
    <property type="entry name" value="Peptidase_M20A"/>
</dbReference>
<dbReference type="NCBIfam" id="TIGR01246">
    <property type="entry name" value="dapE_proteo"/>
    <property type="match status" value="1"/>
</dbReference>
<dbReference type="NCBIfam" id="NF009557">
    <property type="entry name" value="PRK13009.1"/>
    <property type="match status" value="1"/>
</dbReference>
<dbReference type="PANTHER" id="PTHR43808">
    <property type="entry name" value="ACETYLORNITHINE DEACETYLASE"/>
    <property type="match status" value="1"/>
</dbReference>
<dbReference type="PANTHER" id="PTHR43808:SF31">
    <property type="entry name" value="N-ACETYL-L-CITRULLINE DEACETYLASE"/>
    <property type="match status" value="1"/>
</dbReference>
<dbReference type="Pfam" id="PF07687">
    <property type="entry name" value="M20_dimer"/>
    <property type="match status" value="1"/>
</dbReference>
<dbReference type="Pfam" id="PF01546">
    <property type="entry name" value="Peptidase_M20"/>
    <property type="match status" value="1"/>
</dbReference>
<dbReference type="SUPFAM" id="SSF55031">
    <property type="entry name" value="Bacterial exopeptidase dimerisation domain"/>
    <property type="match status" value="1"/>
</dbReference>
<dbReference type="SUPFAM" id="SSF53187">
    <property type="entry name" value="Zn-dependent exopeptidases"/>
    <property type="match status" value="1"/>
</dbReference>
<dbReference type="PROSITE" id="PS00759">
    <property type="entry name" value="ARGE_DAPE_CPG2_2"/>
    <property type="match status" value="1"/>
</dbReference>
<sequence>MTAEHFPVTELAKDLISRPSVTPLDEGCQTLMAERLSAIGFNIEPMIFEDTTNMWARRGNQGPVFCFAGHTDVVPTGDISRWHTPPFEPTIIDGYLYGRGAADMKGSLAAMIVATERFVTKHPDHQGSIAFLITSDEEGPFINGTTRVIDTLEARKEKITWALVGEPSSTLKLGDVVKNGRRGSLTGNLTIKGIQGHVAYPHLADNPIHKAAPFLAELSQMHWDNGNEFFPPTSMQIANIHGGTGASNVIPGALEVMFNFRYSTEVTAEILIERVEALLKAHELDYDISWIFNGLPFLTGDGPLLDATRYAIHQVTGYDTSPQTTGGTSDGRFIAPTGAKVLELGPVNATIHKVNECVKVDDLEQLALCYEVILEQLLC</sequence>
<keyword id="KW-0028">Amino-acid biosynthesis</keyword>
<keyword id="KW-0170">Cobalt</keyword>
<keyword id="KW-0220">Diaminopimelate biosynthesis</keyword>
<keyword id="KW-0378">Hydrolase</keyword>
<keyword id="KW-0457">Lysine biosynthesis</keyword>
<keyword id="KW-0479">Metal-binding</keyword>
<keyword id="KW-0862">Zinc</keyword>
<evidence type="ECO:0000255" key="1">
    <source>
        <dbReference type="HAMAP-Rule" id="MF_01690"/>
    </source>
</evidence>
<protein>
    <recommendedName>
        <fullName evidence="1">Succinyl-diaminopimelate desuccinylase</fullName>
        <shortName evidence="1">SDAP desuccinylase</shortName>
        <ecNumber evidence="1">3.5.1.18</ecNumber>
    </recommendedName>
    <alternativeName>
        <fullName evidence="1">N-succinyl-LL-2,6-diaminoheptanedioate amidohydrolase</fullName>
    </alternativeName>
</protein>